<gene>
    <name evidence="1" type="primary">mtgA</name>
    <name type="ordered locus">CKO_04611</name>
</gene>
<keyword id="KW-0997">Cell inner membrane</keyword>
<keyword id="KW-1003">Cell membrane</keyword>
<keyword id="KW-0133">Cell shape</keyword>
<keyword id="KW-0961">Cell wall biogenesis/degradation</keyword>
<keyword id="KW-0328">Glycosyltransferase</keyword>
<keyword id="KW-0472">Membrane</keyword>
<keyword id="KW-0573">Peptidoglycan synthesis</keyword>
<keyword id="KW-1185">Reference proteome</keyword>
<keyword id="KW-0808">Transferase</keyword>
<keyword id="KW-0812">Transmembrane</keyword>
<keyword id="KW-1133">Transmembrane helix</keyword>
<protein>
    <recommendedName>
        <fullName evidence="1">Biosynthetic peptidoglycan transglycosylase</fullName>
        <ecNumber evidence="1">2.4.99.28</ecNumber>
    </recommendedName>
    <alternativeName>
        <fullName evidence="1">Glycan polymerase</fullName>
    </alternativeName>
    <alternativeName>
        <fullName evidence="1">Peptidoglycan glycosyltransferase MtgA</fullName>
        <shortName evidence="1">PGT</shortName>
    </alternativeName>
</protein>
<feature type="chain" id="PRO_1000017303" description="Biosynthetic peptidoglycan transglycosylase">
    <location>
        <begin position="1"/>
        <end position="242"/>
    </location>
</feature>
<feature type="transmembrane region" description="Helical" evidence="1">
    <location>
        <begin position="19"/>
        <end position="39"/>
    </location>
</feature>
<comment type="function">
    <text evidence="1">Peptidoglycan polymerase that catalyzes glycan chain elongation from lipid-linked precursors.</text>
</comment>
<comment type="catalytic activity">
    <reaction evidence="1">
        <text>[GlcNAc-(1-&gt;4)-Mur2Ac(oyl-L-Ala-gamma-D-Glu-L-Lys-D-Ala-D-Ala)](n)-di-trans,octa-cis-undecaprenyl diphosphate + beta-D-GlcNAc-(1-&gt;4)-Mur2Ac(oyl-L-Ala-gamma-D-Glu-L-Lys-D-Ala-D-Ala)-di-trans,octa-cis-undecaprenyl diphosphate = [GlcNAc-(1-&gt;4)-Mur2Ac(oyl-L-Ala-gamma-D-Glu-L-Lys-D-Ala-D-Ala)](n+1)-di-trans,octa-cis-undecaprenyl diphosphate + di-trans,octa-cis-undecaprenyl diphosphate + H(+)</text>
        <dbReference type="Rhea" id="RHEA:23708"/>
        <dbReference type="Rhea" id="RHEA-COMP:9602"/>
        <dbReference type="Rhea" id="RHEA-COMP:9603"/>
        <dbReference type="ChEBI" id="CHEBI:15378"/>
        <dbReference type="ChEBI" id="CHEBI:58405"/>
        <dbReference type="ChEBI" id="CHEBI:60033"/>
        <dbReference type="ChEBI" id="CHEBI:78435"/>
        <dbReference type="EC" id="2.4.99.28"/>
    </reaction>
</comment>
<comment type="pathway">
    <text evidence="1">Cell wall biogenesis; peptidoglycan biosynthesis.</text>
</comment>
<comment type="subcellular location">
    <subcellularLocation>
        <location evidence="1">Cell inner membrane</location>
        <topology evidence="1">Single-pass membrane protein</topology>
    </subcellularLocation>
</comment>
<comment type="similarity">
    <text evidence="1">Belongs to the glycosyltransferase 51 family.</text>
</comment>
<reference key="1">
    <citation type="submission" date="2007-08" db="EMBL/GenBank/DDBJ databases">
        <authorList>
            <consortium name="The Citrobacter koseri Genome Sequencing Project"/>
            <person name="McClelland M."/>
            <person name="Sanderson E.K."/>
            <person name="Porwollik S."/>
            <person name="Spieth J."/>
            <person name="Clifton W.S."/>
            <person name="Latreille P."/>
            <person name="Courtney L."/>
            <person name="Wang C."/>
            <person name="Pepin K."/>
            <person name="Bhonagiri V."/>
            <person name="Nash W."/>
            <person name="Johnson M."/>
            <person name="Thiruvilangam P."/>
            <person name="Wilson R."/>
        </authorList>
    </citation>
    <scope>NUCLEOTIDE SEQUENCE [LARGE SCALE GENOMIC DNA]</scope>
    <source>
        <strain>ATCC BAA-895 / CDC 4225-83 / SGSC4696</strain>
    </source>
</reference>
<organism>
    <name type="scientific">Citrobacter koseri (strain ATCC BAA-895 / CDC 4225-83 / SGSC4696)</name>
    <dbReference type="NCBI Taxonomy" id="290338"/>
    <lineage>
        <taxon>Bacteria</taxon>
        <taxon>Pseudomonadati</taxon>
        <taxon>Pseudomonadota</taxon>
        <taxon>Gammaproteobacteria</taxon>
        <taxon>Enterobacterales</taxon>
        <taxon>Enterobacteriaceae</taxon>
        <taxon>Citrobacter</taxon>
    </lineage>
</organism>
<evidence type="ECO:0000255" key="1">
    <source>
        <dbReference type="HAMAP-Rule" id="MF_00766"/>
    </source>
</evidence>
<sequence>MSKGRFTPLASLRRLLLRILVVLAVFWGGGIALFSVVPVPFSAVMVERQISAWLQGDFGYVAHSDWAGMDAISPWMGLAVIAAEDQKFPEHWGFDVSAIEKALAHNERNENRIRGASTLSQQTAKNLFLWDGRSWLRKGLEAGLTVGLETVWSKKRILTVYLNIAEFGDGVFGVEAASQRYFNKPASRLSMSEAALLAAVLPNPLRFKANAPSGYVRSRQAWILRQMRQLGGESFMTRNHLY</sequence>
<name>MTGA_CITK8</name>
<proteinExistence type="inferred from homology"/>
<accession>A8AQ99</accession>
<dbReference type="EC" id="2.4.99.28" evidence="1"/>
<dbReference type="EMBL" id="CP000822">
    <property type="protein sequence ID" value="ABV15662.1"/>
    <property type="molecule type" value="Genomic_DNA"/>
</dbReference>
<dbReference type="RefSeq" id="WP_012135341.1">
    <property type="nucleotide sequence ID" value="NC_009792.1"/>
</dbReference>
<dbReference type="SMR" id="A8AQ99"/>
<dbReference type="STRING" id="290338.CKO_04611"/>
<dbReference type="CAZy" id="GT51">
    <property type="family name" value="Glycosyltransferase Family 51"/>
</dbReference>
<dbReference type="GeneID" id="45138151"/>
<dbReference type="KEGG" id="cko:CKO_04611"/>
<dbReference type="HOGENOM" id="CLU_006354_1_1_6"/>
<dbReference type="OrthoDB" id="9766909at2"/>
<dbReference type="UniPathway" id="UPA00219"/>
<dbReference type="Proteomes" id="UP000008148">
    <property type="component" value="Chromosome"/>
</dbReference>
<dbReference type="GO" id="GO:0009274">
    <property type="term" value="C:peptidoglycan-based cell wall"/>
    <property type="evidence" value="ECO:0007669"/>
    <property type="project" value="InterPro"/>
</dbReference>
<dbReference type="GO" id="GO:0005886">
    <property type="term" value="C:plasma membrane"/>
    <property type="evidence" value="ECO:0007669"/>
    <property type="project" value="UniProtKB-SubCell"/>
</dbReference>
<dbReference type="GO" id="GO:0016763">
    <property type="term" value="F:pentosyltransferase activity"/>
    <property type="evidence" value="ECO:0007669"/>
    <property type="project" value="InterPro"/>
</dbReference>
<dbReference type="GO" id="GO:0008955">
    <property type="term" value="F:peptidoglycan glycosyltransferase activity"/>
    <property type="evidence" value="ECO:0007669"/>
    <property type="project" value="UniProtKB-UniRule"/>
</dbReference>
<dbReference type="GO" id="GO:0071555">
    <property type="term" value="P:cell wall organization"/>
    <property type="evidence" value="ECO:0007669"/>
    <property type="project" value="UniProtKB-KW"/>
</dbReference>
<dbReference type="GO" id="GO:0009252">
    <property type="term" value="P:peptidoglycan biosynthetic process"/>
    <property type="evidence" value="ECO:0007669"/>
    <property type="project" value="UniProtKB-UniRule"/>
</dbReference>
<dbReference type="GO" id="GO:0008360">
    <property type="term" value="P:regulation of cell shape"/>
    <property type="evidence" value="ECO:0007669"/>
    <property type="project" value="UniProtKB-KW"/>
</dbReference>
<dbReference type="Gene3D" id="1.10.3810.10">
    <property type="entry name" value="Biosynthetic peptidoglycan transglycosylase-like"/>
    <property type="match status" value="1"/>
</dbReference>
<dbReference type="HAMAP" id="MF_00766">
    <property type="entry name" value="PGT_MtgA"/>
    <property type="match status" value="1"/>
</dbReference>
<dbReference type="InterPro" id="IPR001264">
    <property type="entry name" value="Glyco_trans_51"/>
</dbReference>
<dbReference type="InterPro" id="IPR023346">
    <property type="entry name" value="Lysozyme-like_dom_sf"/>
</dbReference>
<dbReference type="InterPro" id="IPR036950">
    <property type="entry name" value="PBP_transglycosylase"/>
</dbReference>
<dbReference type="InterPro" id="IPR011812">
    <property type="entry name" value="Pep_trsgly"/>
</dbReference>
<dbReference type="NCBIfam" id="TIGR02070">
    <property type="entry name" value="mono_pep_trsgly"/>
    <property type="match status" value="1"/>
</dbReference>
<dbReference type="PANTHER" id="PTHR30400:SF0">
    <property type="entry name" value="BIOSYNTHETIC PEPTIDOGLYCAN TRANSGLYCOSYLASE"/>
    <property type="match status" value="1"/>
</dbReference>
<dbReference type="PANTHER" id="PTHR30400">
    <property type="entry name" value="MONOFUNCTIONAL BIOSYNTHETIC PEPTIDOGLYCAN TRANSGLYCOSYLASE"/>
    <property type="match status" value="1"/>
</dbReference>
<dbReference type="Pfam" id="PF00912">
    <property type="entry name" value="Transgly"/>
    <property type="match status" value="1"/>
</dbReference>
<dbReference type="SUPFAM" id="SSF53955">
    <property type="entry name" value="Lysozyme-like"/>
    <property type="match status" value="1"/>
</dbReference>